<protein>
    <recommendedName>
        <fullName evidence="1">DNA topoisomerase 1</fullName>
        <ecNumber evidence="1">5.6.2.1</ecNumber>
    </recommendedName>
    <alternativeName>
        <fullName evidence="1">DNA topoisomerase I</fullName>
    </alternativeName>
    <alternativeName>
        <fullName>Omega-protein</fullName>
    </alternativeName>
    <alternativeName>
        <fullName>Relaxing enzyme</fullName>
    </alternativeName>
    <alternativeName>
        <fullName>Swivelase</fullName>
    </alternativeName>
    <alternativeName>
        <fullName>Untwisting enzyme</fullName>
    </alternativeName>
</protein>
<name>TOP1_SYNE7</name>
<reference key="1">
    <citation type="journal article" date="1995" name="Plant Physiol.">
        <title>The genomic region of rbcLS in Synechococcus sp. PCC 7942 contains genes involved in the ability to grow under low CO2 concentration and in chlorophyll biosynthesis.</title>
        <authorList>
            <person name="Ronen-Tarazi M."/>
            <person name="Lieman-Hurwitz J."/>
            <person name="Gabay C."/>
            <person name="Orus M.I."/>
            <person name="Kaplan A."/>
        </authorList>
    </citation>
    <scope>NUCLEOTIDE SEQUENCE [GENOMIC DNA]</scope>
</reference>
<reference key="2">
    <citation type="submission" date="2005-08" db="EMBL/GenBank/DDBJ databases">
        <title>Complete sequence of chromosome 1 of Synechococcus elongatus PCC 7942.</title>
        <authorList>
            <consortium name="US DOE Joint Genome Institute"/>
            <person name="Copeland A."/>
            <person name="Lucas S."/>
            <person name="Lapidus A."/>
            <person name="Barry K."/>
            <person name="Detter J.C."/>
            <person name="Glavina T."/>
            <person name="Hammon N."/>
            <person name="Israni S."/>
            <person name="Pitluck S."/>
            <person name="Schmutz J."/>
            <person name="Larimer F."/>
            <person name="Land M."/>
            <person name="Kyrpides N."/>
            <person name="Lykidis A."/>
            <person name="Golden S."/>
            <person name="Richardson P."/>
        </authorList>
    </citation>
    <scope>NUCLEOTIDE SEQUENCE [LARGE SCALE GENOMIC DNA]</scope>
    <source>
        <strain>ATCC 33912 / PCC 7942 / FACHB-805</strain>
    </source>
</reference>
<gene>
    <name evidence="1" type="primary">topA</name>
    <name type="ordered locus">Synpcc7942_1416</name>
</gene>
<accession>P34185</accession>
<accession>Q31NC3</accession>
<feature type="chain" id="PRO_0000145167" description="DNA topoisomerase 1">
    <location>
        <begin position="1"/>
        <end position="883"/>
    </location>
</feature>
<feature type="domain" description="Toprim" evidence="1">
    <location>
        <begin position="2"/>
        <end position="126"/>
    </location>
</feature>
<feature type="domain" description="Topo IA-type catalytic" evidence="2">
    <location>
        <begin position="141"/>
        <end position="583"/>
    </location>
</feature>
<feature type="region of interest" description="Interaction with DNA" evidence="1">
    <location>
        <begin position="175"/>
        <end position="180"/>
    </location>
</feature>
<feature type="region of interest" description="Disordered" evidence="3">
    <location>
        <begin position="271"/>
        <end position="294"/>
    </location>
</feature>
<feature type="region of interest" description="Disordered" evidence="3">
    <location>
        <begin position="842"/>
        <end position="883"/>
    </location>
</feature>
<feature type="compositionally biased region" description="Basic residues" evidence="3">
    <location>
        <begin position="867"/>
        <end position="883"/>
    </location>
</feature>
<feature type="active site" description="O-(5'-phospho-DNA)-tyrosine intermediate" evidence="2">
    <location>
        <position position="320"/>
    </location>
</feature>
<feature type="binding site" evidence="1">
    <location>
        <position position="8"/>
    </location>
    <ligand>
        <name>Mg(2+)</name>
        <dbReference type="ChEBI" id="CHEBI:18420"/>
        <note>catalytic</note>
    </ligand>
</feature>
<feature type="binding site" evidence="1">
    <location>
        <position position="95"/>
    </location>
    <ligand>
        <name>Mg(2+)</name>
        <dbReference type="ChEBI" id="CHEBI:18420"/>
        <note>catalytic</note>
    </ligand>
</feature>
<feature type="site" description="Interaction with DNA" evidence="1">
    <location>
        <position position="32"/>
    </location>
</feature>
<feature type="site" description="Interaction with DNA" evidence="1">
    <location>
        <position position="151"/>
    </location>
</feature>
<feature type="site" description="Interaction with DNA" evidence="1">
    <location>
        <position position="152"/>
    </location>
</feature>
<feature type="site" description="Interaction with DNA" evidence="1">
    <location>
        <position position="155"/>
    </location>
</feature>
<feature type="site" description="Interaction with DNA" evidence="1">
    <location>
        <position position="160"/>
    </location>
</feature>
<feature type="site" description="Interaction with DNA" evidence="1">
    <location>
        <position position="167"/>
    </location>
</feature>
<feature type="site" description="Interaction with DNA" evidence="1">
    <location>
        <position position="322"/>
    </location>
</feature>
<feature type="site" description="Interaction with DNA" evidence="1">
    <location>
        <position position="515"/>
    </location>
</feature>
<feature type="sequence conflict" description="In Ref. 1; CAA51086." evidence="4" ref="1">
    <original>ES</original>
    <variation>KV</variation>
    <location>
        <begin position="101"/>
        <end position="102"/>
    </location>
</feature>
<feature type="sequence conflict" description="In Ref. 1; CAA51086." evidence="4" ref="1">
    <original>L</original>
    <variation>V</variation>
    <location>
        <position position="392"/>
    </location>
</feature>
<comment type="function">
    <text evidence="1">Releases the supercoiling and torsional tension of DNA, which is introduced during the DNA replication and transcription, by transiently cleaving and rejoining one strand of the DNA duplex. Introduces a single-strand break via transesterification at a target site in duplex DNA. The scissile phosphodiester is attacked by the catalytic tyrosine of the enzyme, resulting in the formation of a DNA-(5'-phosphotyrosyl)-enzyme intermediate and the expulsion of a 3'-OH DNA strand. The free DNA strand then undergoes passage around the unbroken strand, thus removing DNA supercoils. Finally, in the religation step, the DNA 3'-OH attacks the covalent intermediate to expel the active-site tyrosine and restore the DNA phosphodiester backbone.</text>
</comment>
<comment type="catalytic activity">
    <reaction evidence="1">
        <text>ATP-independent breakage of single-stranded DNA, followed by passage and rejoining.</text>
        <dbReference type="EC" id="5.6.2.1"/>
    </reaction>
</comment>
<comment type="cofactor">
    <cofactor evidence="1">
        <name>Mg(2+)</name>
        <dbReference type="ChEBI" id="CHEBI:18420"/>
    </cofactor>
</comment>
<comment type="subunit">
    <text evidence="1">Monomer.</text>
</comment>
<comment type="similarity">
    <text evidence="1">Belongs to the type IA topoisomerase family.</text>
</comment>
<comment type="sequence caution" evidence="4">
    <conflict type="frameshift">
        <sequence resource="EMBL-CDS" id="CAA51086"/>
    </conflict>
</comment>
<proteinExistence type="inferred from homology"/>
<keyword id="KW-0238">DNA-binding</keyword>
<keyword id="KW-0413">Isomerase</keyword>
<keyword id="KW-0460">Magnesium</keyword>
<keyword id="KW-0479">Metal-binding</keyword>
<keyword id="KW-1185">Reference proteome</keyword>
<keyword id="KW-0799">Topoisomerase</keyword>
<evidence type="ECO:0000255" key="1">
    <source>
        <dbReference type="HAMAP-Rule" id="MF_00952"/>
    </source>
</evidence>
<evidence type="ECO:0000255" key="2">
    <source>
        <dbReference type="PROSITE-ProRule" id="PRU01383"/>
    </source>
</evidence>
<evidence type="ECO:0000256" key="3">
    <source>
        <dbReference type="SAM" id="MobiDB-lite"/>
    </source>
</evidence>
<evidence type="ECO:0000305" key="4"/>
<organism>
    <name type="scientific">Synechococcus elongatus (strain ATCC 33912 / PCC 7942 / FACHB-805)</name>
    <name type="common">Anacystis nidulans R2</name>
    <dbReference type="NCBI Taxonomy" id="1140"/>
    <lineage>
        <taxon>Bacteria</taxon>
        <taxon>Bacillati</taxon>
        <taxon>Cyanobacteriota</taxon>
        <taxon>Cyanophyceae</taxon>
        <taxon>Synechococcales</taxon>
        <taxon>Synechococcaceae</taxon>
        <taxon>Synechococcus</taxon>
    </lineage>
</organism>
<sequence>MPKLVIVESPTKARTIRNYLPKDYRVEASMGHVRDLPQSASDIPTELKGEKWSNLGVDVENNFAPLYIVPKDKKKIVKTLKDALKDADELILATDEDREGESISWHLLQLLQPRVPTKRMVFHEITQEAIQAALKNCRDVDQRLVHAQETRRILDRLVGYTLSPLLWKKIAWGLSAGRVQSVAVRLLVQRERARRAFRQGSYWDLKAQLTVEAGQFEAKLWTLAGQRLATGNDFDESTGQIIAGRQVCLLDQQEAEALRDRLQTQPWQVKSLEEKPTTRKPAPPFTTSTLQQESNRKLRLSARETMRVAQSLYERGFITYMRTDSVHLSQQAIEAARSCVEQMYGKNYLSPQPRQFTTKSKNAQEAHEAIRPAGNTFRLPQETGLSGAEFALYDLIWKRTIASQMAEARQTMLSVLLEVDNAEFRASGKRIDFPGFFRAYVEGSDDPDAALEDREILLPALKVGDRPTCQELAAIGHETQPPARYTEASLVKMLENEGIGRPSTYASIIGTIVDRGYAQLVSNTLTPTFTAFAVTALLEQHFPDLVDTSFSARMEQSLDDISNGEVDWLPYLSQFYRGDRGLEEQVKLRESEIDPAAARTVALEGLPAKVRIGRFGAYLEAEADGEPIKANLPKELTPADLDVQRVETLLRQKTEGPDQLGTHPETDEPIYLLTGAYGPYVQLGAATEEKPKPKRASLPKGMSLETISLEQAVGLLSLPRTLGEHPETGRRIQAGLGRFGPYVVCDLGGGEKDYRSLKADDDVLTIDLDRALELLAQPKKSRGRGKEPIREVGLHPDDQAPIQIFEGPYGLYLKHGKVNASLPEDEKPETISLETAVAALAAKAGQAKAKGGRRSTGTPKSGETKARTTKTTKKTTTRRTTSR</sequence>
<dbReference type="EC" id="5.6.2.1" evidence="1"/>
<dbReference type="EMBL" id="X72391">
    <property type="protein sequence ID" value="CAA51086.1"/>
    <property type="status" value="ALT_FRAME"/>
    <property type="molecule type" value="Genomic_DNA"/>
</dbReference>
<dbReference type="EMBL" id="CP000100">
    <property type="protein sequence ID" value="ABB57446.1"/>
    <property type="molecule type" value="Genomic_DNA"/>
</dbReference>
<dbReference type="PIR" id="S32158">
    <property type="entry name" value="S32158"/>
</dbReference>
<dbReference type="RefSeq" id="WP_011242453.1">
    <property type="nucleotide sequence ID" value="NZ_JACJTX010000004.1"/>
</dbReference>
<dbReference type="SMR" id="P34185"/>
<dbReference type="STRING" id="1140.Synpcc7942_1416"/>
<dbReference type="PaxDb" id="1140-Synpcc7942_1416"/>
<dbReference type="GeneID" id="72430278"/>
<dbReference type="KEGG" id="syf:Synpcc7942_1416"/>
<dbReference type="eggNOG" id="COG0550">
    <property type="taxonomic scope" value="Bacteria"/>
</dbReference>
<dbReference type="HOGENOM" id="CLU_002929_2_0_3"/>
<dbReference type="OrthoDB" id="9804262at2"/>
<dbReference type="BioCyc" id="SYNEL:SYNPCC7942_1416-MONOMER"/>
<dbReference type="Proteomes" id="UP000889800">
    <property type="component" value="Chromosome"/>
</dbReference>
<dbReference type="GO" id="GO:0003677">
    <property type="term" value="F:DNA binding"/>
    <property type="evidence" value="ECO:0007669"/>
    <property type="project" value="UniProtKB-KW"/>
</dbReference>
<dbReference type="GO" id="GO:0003917">
    <property type="term" value="F:DNA topoisomerase type I (single strand cut, ATP-independent) activity"/>
    <property type="evidence" value="ECO:0007669"/>
    <property type="project" value="UniProtKB-UniRule"/>
</dbReference>
<dbReference type="GO" id="GO:0046872">
    <property type="term" value="F:metal ion binding"/>
    <property type="evidence" value="ECO:0007669"/>
    <property type="project" value="UniProtKB-KW"/>
</dbReference>
<dbReference type="GO" id="GO:0006265">
    <property type="term" value="P:DNA topological change"/>
    <property type="evidence" value="ECO:0007669"/>
    <property type="project" value="UniProtKB-UniRule"/>
</dbReference>
<dbReference type="CDD" id="cd00186">
    <property type="entry name" value="TOP1Ac"/>
    <property type="match status" value="1"/>
</dbReference>
<dbReference type="CDD" id="cd03363">
    <property type="entry name" value="TOPRIM_TopoIA_TopoI"/>
    <property type="match status" value="1"/>
</dbReference>
<dbReference type="Gene3D" id="3.40.50.140">
    <property type="match status" value="1"/>
</dbReference>
<dbReference type="Gene3D" id="1.10.460.10">
    <property type="entry name" value="Topoisomerase I, domain 2"/>
    <property type="match status" value="1"/>
</dbReference>
<dbReference type="Gene3D" id="2.70.20.10">
    <property type="entry name" value="Topoisomerase I, domain 3"/>
    <property type="match status" value="1"/>
</dbReference>
<dbReference type="Gene3D" id="1.10.290.10">
    <property type="entry name" value="Topoisomerase I, domain 4"/>
    <property type="match status" value="1"/>
</dbReference>
<dbReference type="HAMAP" id="MF_00952">
    <property type="entry name" value="Topoisom_1_prok"/>
    <property type="match status" value="1"/>
</dbReference>
<dbReference type="InterPro" id="IPR000380">
    <property type="entry name" value="Topo_IA"/>
</dbReference>
<dbReference type="InterPro" id="IPR003601">
    <property type="entry name" value="Topo_IA_2"/>
</dbReference>
<dbReference type="InterPro" id="IPR023406">
    <property type="entry name" value="Topo_IA_AS"/>
</dbReference>
<dbReference type="InterPro" id="IPR013497">
    <property type="entry name" value="Topo_IA_cen"/>
</dbReference>
<dbReference type="InterPro" id="IPR013824">
    <property type="entry name" value="Topo_IA_cen_sub1"/>
</dbReference>
<dbReference type="InterPro" id="IPR013825">
    <property type="entry name" value="Topo_IA_cen_sub2"/>
</dbReference>
<dbReference type="InterPro" id="IPR013826">
    <property type="entry name" value="Topo_IA_cen_sub3"/>
</dbReference>
<dbReference type="InterPro" id="IPR023405">
    <property type="entry name" value="Topo_IA_core_domain"/>
</dbReference>
<dbReference type="InterPro" id="IPR003602">
    <property type="entry name" value="Topo_IA_DNA-bd_dom"/>
</dbReference>
<dbReference type="InterPro" id="IPR005733">
    <property type="entry name" value="TopoI_bac-type"/>
</dbReference>
<dbReference type="InterPro" id="IPR028612">
    <property type="entry name" value="Topoisom_1_IA"/>
</dbReference>
<dbReference type="InterPro" id="IPR025589">
    <property type="entry name" value="Toprim_C_rpt"/>
</dbReference>
<dbReference type="InterPro" id="IPR006171">
    <property type="entry name" value="TOPRIM_dom"/>
</dbReference>
<dbReference type="InterPro" id="IPR034149">
    <property type="entry name" value="TOPRIM_TopoI"/>
</dbReference>
<dbReference type="NCBIfam" id="TIGR01051">
    <property type="entry name" value="topA_bact"/>
    <property type="match status" value="1"/>
</dbReference>
<dbReference type="PANTHER" id="PTHR42785:SF1">
    <property type="entry name" value="DNA TOPOISOMERASE"/>
    <property type="match status" value="1"/>
</dbReference>
<dbReference type="PANTHER" id="PTHR42785">
    <property type="entry name" value="DNA TOPOISOMERASE, TYPE IA, CORE"/>
    <property type="match status" value="1"/>
</dbReference>
<dbReference type="Pfam" id="PF01131">
    <property type="entry name" value="Topoisom_bac"/>
    <property type="match status" value="1"/>
</dbReference>
<dbReference type="Pfam" id="PF01751">
    <property type="entry name" value="Toprim"/>
    <property type="match status" value="1"/>
</dbReference>
<dbReference type="Pfam" id="PF13368">
    <property type="entry name" value="Toprim_C_rpt"/>
    <property type="match status" value="4"/>
</dbReference>
<dbReference type="PRINTS" id="PR00417">
    <property type="entry name" value="PRTPISMRASEI"/>
</dbReference>
<dbReference type="SMART" id="SM00437">
    <property type="entry name" value="TOP1Ac"/>
    <property type="match status" value="1"/>
</dbReference>
<dbReference type="SMART" id="SM00436">
    <property type="entry name" value="TOP1Bc"/>
    <property type="match status" value="1"/>
</dbReference>
<dbReference type="SMART" id="SM00493">
    <property type="entry name" value="TOPRIM"/>
    <property type="match status" value="1"/>
</dbReference>
<dbReference type="SUPFAM" id="SSF56712">
    <property type="entry name" value="Prokaryotic type I DNA topoisomerase"/>
    <property type="match status" value="1"/>
</dbReference>
<dbReference type="PROSITE" id="PS00396">
    <property type="entry name" value="TOPO_IA_1"/>
    <property type="match status" value="1"/>
</dbReference>
<dbReference type="PROSITE" id="PS52039">
    <property type="entry name" value="TOPO_IA_2"/>
    <property type="match status" value="1"/>
</dbReference>
<dbReference type="PROSITE" id="PS50880">
    <property type="entry name" value="TOPRIM"/>
    <property type="match status" value="1"/>
</dbReference>